<organism>
    <name type="scientific">Drosophila sechellia</name>
    <name type="common">Fruit fly</name>
    <dbReference type="NCBI Taxonomy" id="7238"/>
    <lineage>
        <taxon>Eukaryota</taxon>
        <taxon>Metazoa</taxon>
        <taxon>Ecdysozoa</taxon>
        <taxon>Arthropoda</taxon>
        <taxon>Hexapoda</taxon>
        <taxon>Insecta</taxon>
        <taxon>Pterygota</taxon>
        <taxon>Neoptera</taxon>
        <taxon>Endopterygota</taxon>
        <taxon>Diptera</taxon>
        <taxon>Brachycera</taxon>
        <taxon>Muscomorpha</taxon>
        <taxon>Ephydroidea</taxon>
        <taxon>Drosophilidae</taxon>
        <taxon>Drosophila</taxon>
        <taxon>Sophophora</taxon>
    </lineage>
</organism>
<protein>
    <recommendedName>
        <fullName evidence="1">Ubiquinone biosynthesis protein COQ4 homolog, mitochondrial</fullName>
    </recommendedName>
    <alternativeName>
        <fullName>4-hydroxy-3-methoxy-5-polyprenylbenzoate decarboxylase</fullName>
        <ecNumber evidence="1">4.1.1.130</ecNumber>
    </alternativeName>
    <alternativeName>
        <fullName evidence="1">Coenzyme Q biosynthesis protein 4 homolog</fullName>
    </alternativeName>
</protein>
<proteinExistence type="inferred from homology"/>
<sequence length="268" mass="30752">MMQRCLRLQKPLALRRGLHLAQVNSQAVTTEAPEAEPLDAFERQYLKERIEISPFQRLFLGAGSSIAALLNPRRHDMIACLGETTGEDALWTILDTMQASEEGQRIMADKPRIHTSTIDFKYLETLPPDTFGAAYVKFLKDNQVTPDSRMAVRFLEDPKLAYLMTRYRECHDLIHTVLDMPTNMLGEVAVKWVEALNTGLPMCYGGAVFGAVRLRPKQRRAYLKHYLPWALENGKRAKPLMPVYWEKRWEQNIHELRSELGITVLNKA</sequence>
<keyword id="KW-0456">Lyase</keyword>
<keyword id="KW-0472">Membrane</keyword>
<keyword id="KW-0479">Metal-binding</keyword>
<keyword id="KW-0496">Mitochondrion</keyword>
<keyword id="KW-0999">Mitochondrion inner membrane</keyword>
<keyword id="KW-1185">Reference proteome</keyword>
<keyword id="KW-0831">Ubiquinone biosynthesis</keyword>
<keyword id="KW-0862">Zinc</keyword>
<accession>B4HKS2</accession>
<dbReference type="EC" id="4.1.1.130" evidence="1"/>
<dbReference type="EMBL" id="CH480815">
    <property type="protein sequence ID" value="EDW41877.1"/>
    <property type="molecule type" value="Genomic_DNA"/>
</dbReference>
<dbReference type="RefSeq" id="XP_002030891.1">
    <property type="nucleotide sequence ID" value="XM_002030855.1"/>
</dbReference>
<dbReference type="SMR" id="B4HKS2"/>
<dbReference type="STRING" id="7238.B4HKS2"/>
<dbReference type="EnsemblMetazoa" id="FBtr0207317">
    <property type="protein sequence ID" value="FBpp0205809"/>
    <property type="gene ID" value="FBgn0179196"/>
</dbReference>
<dbReference type="EnsemblMetazoa" id="XM_032718295.1">
    <property type="protein sequence ID" value="XP_032574186.1"/>
    <property type="gene ID" value="LOC6606082"/>
</dbReference>
<dbReference type="EnsemblMetazoa" id="XM_032718296.1">
    <property type="protein sequence ID" value="XP_032574187.1"/>
    <property type="gene ID" value="LOC6606082"/>
</dbReference>
<dbReference type="GeneID" id="6606082"/>
<dbReference type="KEGG" id="dse:6606082"/>
<dbReference type="HOGENOM" id="CLU_061241_1_1_1"/>
<dbReference type="OMA" id="YYERHFH"/>
<dbReference type="PhylomeDB" id="B4HKS2"/>
<dbReference type="UniPathway" id="UPA00232"/>
<dbReference type="Proteomes" id="UP000001292">
    <property type="component" value="Unassembled WGS sequence"/>
</dbReference>
<dbReference type="GO" id="GO:0031314">
    <property type="term" value="C:extrinsic component of mitochondrial inner membrane"/>
    <property type="evidence" value="ECO:0007669"/>
    <property type="project" value="UniProtKB-UniRule"/>
</dbReference>
<dbReference type="GO" id="GO:0006744">
    <property type="term" value="P:ubiquinone biosynthetic process"/>
    <property type="evidence" value="ECO:0007669"/>
    <property type="project" value="UniProtKB-UniRule"/>
</dbReference>
<dbReference type="HAMAP" id="MF_03111">
    <property type="entry name" value="Coq4"/>
    <property type="match status" value="1"/>
</dbReference>
<dbReference type="InterPro" id="IPR007715">
    <property type="entry name" value="Coq4"/>
</dbReference>
<dbReference type="InterPro" id="IPR027540">
    <property type="entry name" value="Coq4_euk"/>
</dbReference>
<dbReference type="PANTHER" id="PTHR12922">
    <property type="entry name" value="UBIQUINONE BIOSYNTHESIS PROTEIN"/>
    <property type="match status" value="1"/>
</dbReference>
<dbReference type="PANTHER" id="PTHR12922:SF7">
    <property type="entry name" value="UBIQUINONE BIOSYNTHESIS PROTEIN COQ4 HOMOLOG, MITOCHONDRIAL"/>
    <property type="match status" value="1"/>
</dbReference>
<dbReference type="Pfam" id="PF05019">
    <property type="entry name" value="Coq4"/>
    <property type="match status" value="1"/>
</dbReference>
<evidence type="ECO:0000255" key="1">
    <source>
        <dbReference type="HAMAP-Rule" id="MF_03111"/>
    </source>
</evidence>
<reference key="1">
    <citation type="journal article" date="2007" name="Nature">
        <title>Evolution of genes and genomes on the Drosophila phylogeny.</title>
        <authorList>
            <consortium name="Drosophila 12 genomes consortium"/>
        </authorList>
    </citation>
    <scope>NUCLEOTIDE SEQUENCE [LARGE SCALE GENOMIC DNA]</scope>
    <source>
        <strain>Rob3c / Tucson 14021-0248.25</strain>
    </source>
</reference>
<name>COQ4_DROSE</name>
<comment type="function">
    <text evidence="1">Lyase that catalyzes the C1-decarboxylation of 4-hydroxy-3-methoxy-5-(all-trans-polyprenyl)benzoic acid into 2-methoxy-6-(all-trans-polyprenyl)phenol during ubiquinone biosynthesis.</text>
</comment>
<comment type="catalytic activity">
    <reaction evidence="1">
        <text>a 4-hydroxy-3-methoxy-5-(all-trans-polyprenyl)benzoate + H(+) = a 2-methoxy-6-(all-trans-polyprenyl)phenol + CO2</text>
        <dbReference type="Rhea" id="RHEA:81179"/>
        <dbReference type="Rhea" id="RHEA-COMP:9551"/>
        <dbReference type="Rhea" id="RHEA-COMP:10931"/>
        <dbReference type="ChEBI" id="CHEBI:15378"/>
        <dbReference type="ChEBI" id="CHEBI:16526"/>
        <dbReference type="ChEBI" id="CHEBI:62731"/>
        <dbReference type="ChEBI" id="CHEBI:84443"/>
        <dbReference type="EC" id="4.1.1.130"/>
    </reaction>
</comment>
<comment type="cofactor">
    <cofactor evidence="1">
        <name>Zn(2+)</name>
        <dbReference type="ChEBI" id="CHEBI:29105"/>
    </cofactor>
</comment>
<comment type="pathway">
    <text evidence="1">Cofactor biosynthesis; ubiquinone biosynthesis.</text>
</comment>
<comment type="subunit">
    <text evidence="1">Component of a multi-subunit COQ enzyme complex.</text>
</comment>
<comment type="subcellular location">
    <subcellularLocation>
        <location evidence="1">Mitochondrion inner membrane</location>
        <topology evidence="1">Peripheral membrane protein</topology>
        <orientation evidence="1">Matrix side</orientation>
    </subcellularLocation>
</comment>
<comment type="miscellaneous">
    <text evidence="1">This protein may be expected to contain an N-terminal transit peptide but none has been predicted.</text>
</comment>
<comment type="similarity">
    <text evidence="1">Belongs to the COQ4 family.</text>
</comment>
<gene>
    <name type="ORF">GM24332</name>
</gene>
<feature type="chain" id="PRO_0000388067" description="Ubiquinone biosynthesis protein COQ4 homolog, mitochondrial">
    <location>
        <begin position="1"/>
        <end position="268"/>
    </location>
</feature>
<feature type="binding site" evidence="1">
    <location>
        <position position="171"/>
    </location>
    <ligand>
        <name>Zn(2+)</name>
        <dbReference type="ChEBI" id="CHEBI:29105"/>
    </ligand>
</feature>
<feature type="binding site" evidence="1">
    <location>
        <position position="172"/>
    </location>
    <ligand>
        <name>Zn(2+)</name>
        <dbReference type="ChEBI" id="CHEBI:29105"/>
    </ligand>
</feature>
<feature type="binding site" evidence="1">
    <location>
        <position position="175"/>
    </location>
    <ligand>
        <name>Zn(2+)</name>
        <dbReference type="ChEBI" id="CHEBI:29105"/>
    </ligand>
</feature>
<feature type="binding site" evidence="1">
    <location>
        <position position="187"/>
    </location>
    <ligand>
        <name>Zn(2+)</name>
        <dbReference type="ChEBI" id="CHEBI:29105"/>
    </ligand>
</feature>